<proteinExistence type="predicted"/>
<keyword id="KW-0040">ANK repeat</keyword>
<keyword id="KW-0614">Plasmid</keyword>
<geneLocation type="plasmid">
    <name>pRFdelta</name>
</geneLocation>
<sequence>MLLCKIKGYTERQKLNQKLMRAAATGDIEAVQKLVLRGADIYCRDHQGDTALSLAAGSGYLDILDI</sequence>
<reference key="1">
    <citation type="journal article" date="2005" name="PLoS Biol.">
        <title>The genome sequence of Rickettsia felis identifies the first putative conjugative plasmid in an obligate intracellular parasite.</title>
        <authorList>
            <person name="Ogata H."/>
            <person name="Renesto P."/>
            <person name="Audic S."/>
            <person name="Robert C."/>
            <person name="Blanc G."/>
            <person name="Fournier P.-E."/>
            <person name="Parinello H."/>
            <person name="Claverie J.-M."/>
            <person name="Raoult D."/>
        </authorList>
    </citation>
    <scope>NUCLEOTIDE SEQUENCE [LARGE SCALE GENOMIC DNA]</scope>
    <source>
        <strain>ATCC VR-1525 / URRWXCal2</strain>
    </source>
</reference>
<feature type="chain" id="PRO_0000281766" description="Putative ankyrin repeat protein RF_pd14">
    <location>
        <begin position="1"/>
        <end position="66"/>
    </location>
</feature>
<feature type="repeat" description="ANK">
    <location>
        <begin position="14"/>
        <end position="66"/>
    </location>
</feature>
<name>Y2114_RICFE</name>
<dbReference type="EMBL" id="CP000055">
    <property type="protein sequence ID" value="AAY62333.1"/>
    <property type="molecule type" value="Genomic_DNA"/>
</dbReference>
<dbReference type="SMR" id="Q4UJC4"/>
<dbReference type="KEGG" id="rfe:RF_pd14"/>
<dbReference type="HOGENOM" id="CLU_2828440_0_0_5"/>
<dbReference type="OrthoDB" id="8960888at2"/>
<dbReference type="Proteomes" id="UP000008548">
    <property type="component" value="Plasmid pRFdelta"/>
</dbReference>
<dbReference type="Gene3D" id="1.25.40.20">
    <property type="entry name" value="Ankyrin repeat-containing domain"/>
    <property type="match status" value="1"/>
</dbReference>
<dbReference type="InterPro" id="IPR002110">
    <property type="entry name" value="Ankyrin_rpt"/>
</dbReference>
<dbReference type="InterPro" id="IPR036770">
    <property type="entry name" value="Ankyrin_rpt-contain_sf"/>
</dbReference>
<dbReference type="Pfam" id="PF13637">
    <property type="entry name" value="Ank_4"/>
    <property type="match status" value="1"/>
</dbReference>
<dbReference type="SUPFAM" id="SSF48403">
    <property type="entry name" value="Ankyrin repeat"/>
    <property type="match status" value="1"/>
</dbReference>
<dbReference type="PROSITE" id="PS50297">
    <property type="entry name" value="ANK_REP_REGION"/>
    <property type="match status" value="1"/>
</dbReference>
<accession>Q4UJC4</accession>
<gene>
    <name type="ordered locus">RF_pd14</name>
</gene>
<protein>
    <recommendedName>
        <fullName>Putative ankyrin repeat protein RF_pd14</fullName>
    </recommendedName>
</protein>
<organism>
    <name type="scientific">Rickettsia felis (strain ATCC VR-1525 / URRWXCal2)</name>
    <name type="common">Rickettsia azadi</name>
    <dbReference type="NCBI Taxonomy" id="315456"/>
    <lineage>
        <taxon>Bacteria</taxon>
        <taxon>Pseudomonadati</taxon>
        <taxon>Pseudomonadota</taxon>
        <taxon>Alphaproteobacteria</taxon>
        <taxon>Rickettsiales</taxon>
        <taxon>Rickettsiaceae</taxon>
        <taxon>Rickettsieae</taxon>
        <taxon>Rickettsia</taxon>
        <taxon>spotted fever group</taxon>
    </lineage>
</organism>